<evidence type="ECO:0000250" key="1"/>
<evidence type="ECO:0000255" key="2"/>
<evidence type="ECO:0000305" key="3"/>
<organism>
    <name type="scientific">Arabidopsis thaliana</name>
    <name type="common">Mouse-ear cress</name>
    <dbReference type="NCBI Taxonomy" id="3702"/>
    <lineage>
        <taxon>Eukaryota</taxon>
        <taxon>Viridiplantae</taxon>
        <taxon>Streptophyta</taxon>
        <taxon>Embryophyta</taxon>
        <taxon>Tracheophyta</taxon>
        <taxon>Spermatophyta</taxon>
        <taxon>Magnoliopsida</taxon>
        <taxon>eudicotyledons</taxon>
        <taxon>Gunneridae</taxon>
        <taxon>Pentapetalae</taxon>
        <taxon>rosids</taxon>
        <taxon>malvids</taxon>
        <taxon>Brassicales</taxon>
        <taxon>Brassicaceae</taxon>
        <taxon>Camelineae</taxon>
        <taxon>Arabidopsis</taxon>
    </lineage>
</organism>
<sequence>MPTIEEIRAQEVWNNCAVRAVTSGVMGGGLGLMMGLFLGALDNPITHDTMTARQQFVFTAKQMGQRSWNSCKTFAVMGLVFSAAECIVEKARAKHDTVNTAIAGCVTGGSMSARGGPKAACIGCAGFAIFSVLIEKFFDRHT</sequence>
<reference key="1">
    <citation type="journal article" date="2000" name="Nature">
        <title>Sequence and analysis of chromosome 1 of the plant Arabidopsis thaliana.</title>
        <authorList>
            <person name="Theologis A."/>
            <person name="Ecker J.R."/>
            <person name="Palm C.J."/>
            <person name="Federspiel N.A."/>
            <person name="Kaul S."/>
            <person name="White O."/>
            <person name="Alonso J."/>
            <person name="Altafi H."/>
            <person name="Araujo R."/>
            <person name="Bowman C.L."/>
            <person name="Brooks S.Y."/>
            <person name="Buehler E."/>
            <person name="Chan A."/>
            <person name="Chao Q."/>
            <person name="Chen H."/>
            <person name="Cheuk R.F."/>
            <person name="Chin C.W."/>
            <person name="Chung M.K."/>
            <person name="Conn L."/>
            <person name="Conway A.B."/>
            <person name="Conway A.R."/>
            <person name="Creasy T.H."/>
            <person name="Dewar K."/>
            <person name="Dunn P."/>
            <person name="Etgu P."/>
            <person name="Feldblyum T.V."/>
            <person name="Feng J.-D."/>
            <person name="Fong B."/>
            <person name="Fujii C.Y."/>
            <person name="Gill J.E."/>
            <person name="Goldsmith A.D."/>
            <person name="Haas B."/>
            <person name="Hansen N.F."/>
            <person name="Hughes B."/>
            <person name="Huizar L."/>
            <person name="Hunter J.L."/>
            <person name="Jenkins J."/>
            <person name="Johnson-Hopson C."/>
            <person name="Khan S."/>
            <person name="Khaykin E."/>
            <person name="Kim C.J."/>
            <person name="Koo H.L."/>
            <person name="Kremenetskaia I."/>
            <person name="Kurtz D.B."/>
            <person name="Kwan A."/>
            <person name="Lam B."/>
            <person name="Langin-Hooper S."/>
            <person name="Lee A."/>
            <person name="Lee J.M."/>
            <person name="Lenz C.A."/>
            <person name="Li J.H."/>
            <person name="Li Y.-P."/>
            <person name="Lin X."/>
            <person name="Liu S.X."/>
            <person name="Liu Z.A."/>
            <person name="Luros J.S."/>
            <person name="Maiti R."/>
            <person name="Marziali A."/>
            <person name="Militscher J."/>
            <person name="Miranda M."/>
            <person name="Nguyen M."/>
            <person name="Nierman W.C."/>
            <person name="Osborne B.I."/>
            <person name="Pai G."/>
            <person name="Peterson J."/>
            <person name="Pham P.K."/>
            <person name="Rizzo M."/>
            <person name="Rooney T."/>
            <person name="Rowley D."/>
            <person name="Sakano H."/>
            <person name="Salzberg S.L."/>
            <person name="Schwartz J.R."/>
            <person name="Shinn P."/>
            <person name="Southwick A.M."/>
            <person name="Sun H."/>
            <person name="Tallon L.J."/>
            <person name="Tambunga G."/>
            <person name="Toriumi M.J."/>
            <person name="Town C.D."/>
            <person name="Utterback T."/>
            <person name="Van Aken S."/>
            <person name="Vaysberg M."/>
            <person name="Vysotskaia V.S."/>
            <person name="Walker M."/>
            <person name="Wu D."/>
            <person name="Yu G."/>
            <person name="Fraser C.M."/>
            <person name="Venter J.C."/>
            <person name="Davis R.W."/>
        </authorList>
    </citation>
    <scope>NUCLEOTIDE SEQUENCE [LARGE SCALE GENOMIC DNA]</scope>
    <source>
        <strain>cv. Columbia</strain>
    </source>
</reference>
<reference key="2">
    <citation type="journal article" date="2017" name="Plant J.">
        <title>Araport11: a complete reannotation of the Arabidopsis thaliana reference genome.</title>
        <authorList>
            <person name="Cheng C.Y."/>
            <person name="Krishnakumar V."/>
            <person name="Chan A.P."/>
            <person name="Thibaud-Nissen F."/>
            <person name="Schobel S."/>
            <person name="Town C.D."/>
        </authorList>
    </citation>
    <scope>GENOME REANNOTATION</scope>
    <source>
        <strain>cv. Columbia</strain>
    </source>
</reference>
<reference key="3">
    <citation type="submission" date="2002-03" db="EMBL/GenBank/DDBJ databases">
        <title>Full-length cDNA from Arabidopsis thaliana.</title>
        <authorList>
            <person name="Brover V.V."/>
            <person name="Troukhan M.E."/>
            <person name="Alexandrov N.A."/>
            <person name="Lu Y.-P."/>
            <person name="Flavell R.B."/>
            <person name="Feldmann K.A."/>
        </authorList>
    </citation>
    <scope>NUCLEOTIDE SEQUENCE [LARGE SCALE MRNA]</scope>
</reference>
<proteinExistence type="evidence at transcript level"/>
<name>TI224_ARATH</name>
<protein>
    <recommendedName>
        <fullName>Mitochondrial import inner membrane translocase subunit TIM22-4</fullName>
    </recommendedName>
</protein>
<keyword id="KW-0472">Membrane</keyword>
<keyword id="KW-0496">Mitochondrion</keyword>
<keyword id="KW-0999">Mitochondrion inner membrane</keyword>
<keyword id="KW-1185">Reference proteome</keyword>
<keyword id="KW-0812">Transmembrane</keyword>
<keyword id="KW-1133">Transmembrane helix</keyword>
<dbReference type="EMBL" id="AC013354">
    <property type="status" value="NOT_ANNOTATED_CDS"/>
    <property type="molecule type" value="Genomic_DNA"/>
</dbReference>
<dbReference type="EMBL" id="CP002684">
    <property type="protein sequence ID" value="AEE29701.1"/>
    <property type="molecule type" value="Genomic_DNA"/>
</dbReference>
<dbReference type="EMBL" id="AY089200">
    <property type="status" value="NOT_ANNOTATED_CDS"/>
    <property type="molecule type" value="mRNA"/>
</dbReference>
<dbReference type="RefSeq" id="NP_173268.3">
    <property type="nucleotide sequence ID" value="NM_101690.3"/>
</dbReference>
<dbReference type="SMR" id="A1XJK0"/>
<dbReference type="FunCoup" id="A1XJK0">
    <property type="interactions" value="3425"/>
</dbReference>
<dbReference type="STRING" id="3702.A1XJK0"/>
<dbReference type="GlyGen" id="A1XJK0">
    <property type="glycosylation" value="1 site"/>
</dbReference>
<dbReference type="PaxDb" id="3702-AT1G18320.1"/>
<dbReference type="GeneID" id="838412"/>
<dbReference type="KEGG" id="ath:AT1G18320"/>
<dbReference type="Araport" id="AT1G18320"/>
<dbReference type="TAIR" id="AT1G18320"/>
<dbReference type="eggNOG" id="KOG3225">
    <property type="taxonomic scope" value="Eukaryota"/>
</dbReference>
<dbReference type="HOGENOM" id="CLU_091077_1_0_1"/>
<dbReference type="InParanoid" id="A1XJK0"/>
<dbReference type="PRO" id="PR:A1XJK0"/>
<dbReference type="Proteomes" id="UP000006548">
    <property type="component" value="Chromosome 1"/>
</dbReference>
<dbReference type="ExpressionAtlas" id="A1XJK0">
    <property type="expression patterns" value="baseline and differential"/>
</dbReference>
<dbReference type="GO" id="GO:0042721">
    <property type="term" value="C:TIM22 mitochondrial import inner membrane insertion complex"/>
    <property type="evidence" value="ECO:0007669"/>
    <property type="project" value="InterPro"/>
</dbReference>
<dbReference type="GO" id="GO:0045039">
    <property type="term" value="P:protein insertion into mitochondrial inner membrane"/>
    <property type="evidence" value="ECO:0007669"/>
    <property type="project" value="InterPro"/>
</dbReference>
<dbReference type="InterPro" id="IPR039175">
    <property type="entry name" value="TIM22"/>
</dbReference>
<dbReference type="PANTHER" id="PTHR14110">
    <property type="entry name" value="MITOCHONDRIAL IMPORT INNER MEMBRANE TRANSLOCASE SUBUNIT TIM22"/>
    <property type="match status" value="1"/>
</dbReference>
<dbReference type="PANTHER" id="PTHR14110:SF0">
    <property type="entry name" value="MITOCHONDRIAL IMPORT INNER MEMBRANE TRANSLOCASE SUBUNIT TIM22"/>
    <property type="match status" value="1"/>
</dbReference>
<dbReference type="Pfam" id="PF02466">
    <property type="entry name" value="Tim17"/>
    <property type="match status" value="1"/>
</dbReference>
<feature type="chain" id="PRO_0000420937" description="Mitochondrial import inner membrane translocase subunit TIM22-4">
    <location>
        <begin position="1"/>
        <end position="142"/>
    </location>
</feature>
<feature type="transmembrane region" description="Helical" evidence="2">
    <location>
        <begin position="21"/>
        <end position="41"/>
    </location>
</feature>
<feature type="transmembrane region" description="Helical" evidence="2">
    <location>
        <begin position="70"/>
        <end position="88"/>
    </location>
</feature>
<feature type="transmembrane region" description="Helical" evidence="2">
    <location>
        <begin position="97"/>
        <end position="113"/>
    </location>
</feature>
<feature type="transmembrane region" description="Helical" evidence="2">
    <location>
        <begin position="120"/>
        <end position="137"/>
    </location>
</feature>
<gene>
    <name type="primary">TIM22-4</name>
    <name type="ordered locus">At1g18320</name>
    <name type="ORF">F15H18.28</name>
</gene>
<comment type="function">
    <text evidence="1">Essential core component of the TIM22 complex, a complex that mediates the import and insertion of multi-pass transmembrane proteins into the mitochondrial inner membrane.</text>
</comment>
<comment type="subcellular location">
    <subcellularLocation>
        <location evidence="3">Mitochondrion inner membrane</location>
        <topology evidence="3">Multi-pass membrane protein</topology>
    </subcellularLocation>
</comment>
<comment type="similarity">
    <text evidence="3">Belongs to the Tim17/Tim22/Tim23 family.</text>
</comment>
<comment type="sequence caution" evidence="3">
    <conflict type="frameshift">
        <sequence resource="EMBL" id="AY089200"/>
    </conflict>
</comment>
<accession>A1XJK0</accession>
<accession>F4IAQ1</accession>